<accession>A1BHZ8</accession>
<name>DER_CHLPD</name>
<evidence type="ECO:0000255" key="1">
    <source>
        <dbReference type="HAMAP-Rule" id="MF_00195"/>
    </source>
</evidence>
<sequence>MKPLIAIVGRPNVGKSMLFNRILREKSAIVDSTPGVTRDRHISPGEWQGKQFLLMDTGGYCPEGDVISMAMLEQTLMAIRDADIILFLADVRSGLTYDDLEISKLLQRTFQHKQIFFAVNKVETPQLSIDAESFVSTGFTKPYFVSARDGSGVAELLDDMLDSLPVQEKQLVEKDLPTNLAVVGRPNVGKSSFVNALLGANRLIVSDIPGTTRDAIDSRFTRKKQDFVLIDTAGLRKRTKIDAGIEYYSSLRTDKAIERCDVALVMIDARTGIENQDMKIINMAVERKRGVLLLINKWDLVEKDSKTSAHYEKEVRSHMGNLAYIPLLFISALTKKNLYRAIDTAQEISENRSRKITTSALNRFLEVALAEKHPSTKSGKELKIKYMTQIEAPWPVFAFFCNDPELLQTNFRKFLENKLREHFKLEGVTVSLRFFKK</sequence>
<dbReference type="EMBL" id="CP000492">
    <property type="protein sequence ID" value="ABL66025.1"/>
    <property type="molecule type" value="Genomic_DNA"/>
</dbReference>
<dbReference type="RefSeq" id="WP_011745829.1">
    <property type="nucleotide sequence ID" value="NC_008639.1"/>
</dbReference>
<dbReference type="SMR" id="A1BHZ8"/>
<dbReference type="STRING" id="290317.Cpha266_2013"/>
<dbReference type="KEGG" id="cph:Cpha266_2013"/>
<dbReference type="eggNOG" id="COG1160">
    <property type="taxonomic scope" value="Bacteria"/>
</dbReference>
<dbReference type="HOGENOM" id="CLU_016077_6_2_10"/>
<dbReference type="OrthoDB" id="9805918at2"/>
<dbReference type="Proteomes" id="UP000008701">
    <property type="component" value="Chromosome"/>
</dbReference>
<dbReference type="GO" id="GO:0005525">
    <property type="term" value="F:GTP binding"/>
    <property type="evidence" value="ECO:0007669"/>
    <property type="project" value="UniProtKB-UniRule"/>
</dbReference>
<dbReference type="GO" id="GO:0043022">
    <property type="term" value="F:ribosome binding"/>
    <property type="evidence" value="ECO:0007669"/>
    <property type="project" value="TreeGrafter"/>
</dbReference>
<dbReference type="GO" id="GO:0042254">
    <property type="term" value="P:ribosome biogenesis"/>
    <property type="evidence" value="ECO:0007669"/>
    <property type="project" value="UniProtKB-KW"/>
</dbReference>
<dbReference type="CDD" id="cd01894">
    <property type="entry name" value="EngA1"/>
    <property type="match status" value="1"/>
</dbReference>
<dbReference type="CDD" id="cd01895">
    <property type="entry name" value="EngA2"/>
    <property type="match status" value="1"/>
</dbReference>
<dbReference type="FunFam" id="3.30.300.20:FF:000004">
    <property type="entry name" value="GTPase Der"/>
    <property type="match status" value="1"/>
</dbReference>
<dbReference type="FunFam" id="3.40.50.300:FF:000040">
    <property type="entry name" value="GTPase Der"/>
    <property type="match status" value="1"/>
</dbReference>
<dbReference type="Gene3D" id="3.30.300.20">
    <property type="match status" value="1"/>
</dbReference>
<dbReference type="Gene3D" id="3.40.50.300">
    <property type="entry name" value="P-loop containing nucleotide triphosphate hydrolases"/>
    <property type="match status" value="2"/>
</dbReference>
<dbReference type="HAMAP" id="MF_00195">
    <property type="entry name" value="GTPase_Der"/>
    <property type="match status" value="1"/>
</dbReference>
<dbReference type="InterPro" id="IPR031166">
    <property type="entry name" value="G_ENGA"/>
</dbReference>
<dbReference type="InterPro" id="IPR006073">
    <property type="entry name" value="GTP-bd"/>
</dbReference>
<dbReference type="InterPro" id="IPR016484">
    <property type="entry name" value="GTPase_Der"/>
</dbReference>
<dbReference type="InterPro" id="IPR032859">
    <property type="entry name" value="KH_dom-like"/>
</dbReference>
<dbReference type="InterPro" id="IPR015946">
    <property type="entry name" value="KH_dom-like_a/b"/>
</dbReference>
<dbReference type="InterPro" id="IPR027417">
    <property type="entry name" value="P-loop_NTPase"/>
</dbReference>
<dbReference type="InterPro" id="IPR005225">
    <property type="entry name" value="Small_GTP-bd"/>
</dbReference>
<dbReference type="NCBIfam" id="TIGR03594">
    <property type="entry name" value="GTPase_EngA"/>
    <property type="match status" value="1"/>
</dbReference>
<dbReference type="NCBIfam" id="TIGR00231">
    <property type="entry name" value="small_GTP"/>
    <property type="match status" value="2"/>
</dbReference>
<dbReference type="PANTHER" id="PTHR43834">
    <property type="entry name" value="GTPASE DER"/>
    <property type="match status" value="1"/>
</dbReference>
<dbReference type="PANTHER" id="PTHR43834:SF6">
    <property type="entry name" value="GTPASE DER"/>
    <property type="match status" value="1"/>
</dbReference>
<dbReference type="Pfam" id="PF14714">
    <property type="entry name" value="KH_dom-like"/>
    <property type="match status" value="1"/>
</dbReference>
<dbReference type="Pfam" id="PF01926">
    <property type="entry name" value="MMR_HSR1"/>
    <property type="match status" value="2"/>
</dbReference>
<dbReference type="PIRSF" id="PIRSF006485">
    <property type="entry name" value="GTP-binding_EngA"/>
    <property type="match status" value="1"/>
</dbReference>
<dbReference type="PRINTS" id="PR00326">
    <property type="entry name" value="GTP1OBG"/>
</dbReference>
<dbReference type="SUPFAM" id="SSF52540">
    <property type="entry name" value="P-loop containing nucleoside triphosphate hydrolases"/>
    <property type="match status" value="2"/>
</dbReference>
<dbReference type="PROSITE" id="PS51712">
    <property type="entry name" value="G_ENGA"/>
    <property type="match status" value="2"/>
</dbReference>
<gene>
    <name evidence="1" type="primary">der</name>
    <name type="synonym">engA</name>
    <name type="ordered locus">Cpha266_2013</name>
</gene>
<organism>
    <name type="scientific">Chlorobium phaeobacteroides (strain DSM 266 / SMG 266 / 2430)</name>
    <dbReference type="NCBI Taxonomy" id="290317"/>
    <lineage>
        <taxon>Bacteria</taxon>
        <taxon>Pseudomonadati</taxon>
        <taxon>Chlorobiota</taxon>
        <taxon>Chlorobiia</taxon>
        <taxon>Chlorobiales</taxon>
        <taxon>Chlorobiaceae</taxon>
        <taxon>Chlorobium/Pelodictyon group</taxon>
        <taxon>Chlorobium</taxon>
    </lineage>
</organism>
<comment type="function">
    <text evidence="1">GTPase that plays an essential role in the late steps of ribosome biogenesis.</text>
</comment>
<comment type="subunit">
    <text evidence="1">Associates with the 50S ribosomal subunit.</text>
</comment>
<comment type="similarity">
    <text evidence="1">Belongs to the TRAFAC class TrmE-Era-EngA-EngB-Septin-like GTPase superfamily. EngA (Der) GTPase family.</text>
</comment>
<protein>
    <recommendedName>
        <fullName evidence="1">GTPase Der</fullName>
    </recommendedName>
    <alternativeName>
        <fullName evidence="1">GTP-binding protein EngA</fullName>
    </alternativeName>
</protein>
<feature type="chain" id="PRO_1000011601" description="GTPase Der">
    <location>
        <begin position="1"/>
        <end position="437"/>
    </location>
</feature>
<feature type="domain" description="EngA-type G 1">
    <location>
        <begin position="3"/>
        <end position="168"/>
    </location>
</feature>
<feature type="domain" description="EngA-type G 2">
    <location>
        <begin position="178"/>
        <end position="353"/>
    </location>
</feature>
<feature type="domain" description="KH-like" evidence="1">
    <location>
        <begin position="354"/>
        <end position="437"/>
    </location>
</feature>
<feature type="binding site" evidence="1">
    <location>
        <begin position="9"/>
        <end position="16"/>
    </location>
    <ligand>
        <name>GTP</name>
        <dbReference type="ChEBI" id="CHEBI:37565"/>
        <label>1</label>
    </ligand>
</feature>
<feature type="binding site" evidence="1">
    <location>
        <begin position="56"/>
        <end position="60"/>
    </location>
    <ligand>
        <name>GTP</name>
        <dbReference type="ChEBI" id="CHEBI:37565"/>
        <label>1</label>
    </ligand>
</feature>
<feature type="binding site" evidence="1">
    <location>
        <begin position="120"/>
        <end position="123"/>
    </location>
    <ligand>
        <name>GTP</name>
        <dbReference type="ChEBI" id="CHEBI:37565"/>
        <label>1</label>
    </ligand>
</feature>
<feature type="binding site" evidence="1">
    <location>
        <begin position="184"/>
        <end position="191"/>
    </location>
    <ligand>
        <name>GTP</name>
        <dbReference type="ChEBI" id="CHEBI:37565"/>
        <label>2</label>
    </ligand>
</feature>
<feature type="binding site" evidence="1">
    <location>
        <begin position="231"/>
        <end position="235"/>
    </location>
    <ligand>
        <name>GTP</name>
        <dbReference type="ChEBI" id="CHEBI:37565"/>
        <label>2</label>
    </ligand>
</feature>
<feature type="binding site" evidence="1">
    <location>
        <begin position="296"/>
        <end position="299"/>
    </location>
    <ligand>
        <name>GTP</name>
        <dbReference type="ChEBI" id="CHEBI:37565"/>
        <label>2</label>
    </ligand>
</feature>
<reference key="1">
    <citation type="submission" date="2006-12" db="EMBL/GenBank/DDBJ databases">
        <title>Complete sequence of Chlorobium phaeobacteroides DSM 266.</title>
        <authorList>
            <consortium name="US DOE Joint Genome Institute"/>
            <person name="Copeland A."/>
            <person name="Lucas S."/>
            <person name="Lapidus A."/>
            <person name="Barry K."/>
            <person name="Detter J.C."/>
            <person name="Glavina del Rio T."/>
            <person name="Hammon N."/>
            <person name="Israni S."/>
            <person name="Pitluck S."/>
            <person name="Goltsman E."/>
            <person name="Schmutz J."/>
            <person name="Larimer F."/>
            <person name="Land M."/>
            <person name="Hauser L."/>
            <person name="Mikhailova N."/>
            <person name="Li T."/>
            <person name="Overmann J."/>
            <person name="Bryant D.A."/>
            <person name="Richardson P."/>
        </authorList>
    </citation>
    <scope>NUCLEOTIDE SEQUENCE [LARGE SCALE GENOMIC DNA]</scope>
    <source>
        <strain>DSM 266 / SMG 266 / 2430</strain>
    </source>
</reference>
<proteinExistence type="inferred from homology"/>
<keyword id="KW-0342">GTP-binding</keyword>
<keyword id="KW-0547">Nucleotide-binding</keyword>
<keyword id="KW-1185">Reference proteome</keyword>
<keyword id="KW-0677">Repeat</keyword>
<keyword id="KW-0690">Ribosome biogenesis</keyword>